<protein>
    <recommendedName>
        <fullName>Epidermal retinol dehydrogenase 2</fullName>
        <shortName>EPHD-2</shortName>
        <shortName>RDH-E2</shortName>
        <ecNumber evidence="1">1.1.1.105</ecNumber>
    </recommendedName>
    <alternativeName>
        <fullName>Retinal short-chain dehydrogenase reductase 2</fullName>
        <shortName>retSDR2</shortName>
    </alternativeName>
    <alternativeName>
        <fullName>Short-chain dehydrogenase reductase 9</fullName>
    </alternativeName>
    <alternativeName>
        <fullName>Short-chain dehydrogenase/reductase family 16C member 5</fullName>
    </alternativeName>
</protein>
<comment type="function">
    <text evidence="1">Oxidoreductase with strong preference for NAD. Active in both the oxidative and reductive directions. Oxidizes all-trans-retinol in all-trans-retinaldehyde. No activity was detected with 11-cis-retinol or 11-cis-retinaldehyde as substrates with either NAD(+)/NADH or NADP(+)/NADPH.</text>
</comment>
<comment type="catalytic activity">
    <reaction evidence="1">
        <text>all-trans-retinol--[retinol-binding protein] + NAD(+) = all-trans-retinal--[retinol-binding protein] + NADH + H(+)</text>
        <dbReference type="Rhea" id="RHEA:48488"/>
        <dbReference type="Rhea" id="RHEA-COMP:14428"/>
        <dbReference type="Rhea" id="RHEA-COMP:14430"/>
        <dbReference type="ChEBI" id="CHEBI:15378"/>
        <dbReference type="ChEBI" id="CHEBI:17336"/>
        <dbReference type="ChEBI" id="CHEBI:17898"/>
        <dbReference type="ChEBI" id="CHEBI:57540"/>
        <dbReference type="ChEBI" id="CHEBI:57945"/>
        <dbReference type="ChEBI" id="CHEBI:83228"/>
        <dbReference type="EC" id="1.1.1.105"/>
    </reaction>
</comment>
<comment type="pathway">
    <text evidence="1">Cofactor metabolism; retinol metabolism.</text>
</comment>
<comment type="subcellular location">
    <subcellularLocation>
        <location evidence="1">Endoplasmic reticulum membrane</location>
        <topology evidence="4">Multi-pass membrane protein</topology>
    </subcellularLocation>
</comment>
<comment type="similarity">
    <text evidence="5">Belongs to the short-chain dehydrogenases/reductases (SDR) family.</text>
</comment>
<name>RDHE2_MOUSE</name>
<gene>
    <name evidence="6" type="primary">Sdr16c5</name>
    <name type="synonym">Rdhe2</name>
    <name type="synonym">Scdr9</name>
</gene>
<proteinExistence type="evidence at transcript level"/>
<accession>Q7TQA3</accession>
<dbReference type="EC" id="1.1.1.105" evidence="1"/>
<dbReference type="EMBL" id="AY277588">
    <property type="protein sequence ID" value="AAP41074.1"/>
    <property type="molecule type" value="mRNA"/>
</dbReference>
<dbReference type="EMBL" id="AK136508">
    <property type="protein sequence ID" value="BAE23016.1"/>
    <property type="molecule type" value="mRNA"/>
</dbReference>
<dbReference type="EMBL" id="AL807387">
    <property type="status" value="NOT_ANNOTATED_CDS"/>
    <property type="molecule type" value="Genomic_DNA"/>
</dbReference>
<dbReference type="EMBL" id="BC104134">
    <property type="protein sequence ID" value="AAI04135.1"/>
    <property type="molecule type" value="mRNA"/>
</dbReference>
<dbReference type="EMBL" id="BC104135">
    <property type="protein sequence ID" value="AAI04136.1"/>
    <property type="molecule type" value="mRNA"/>
</dbReference>
<dbReference type="CCDS" id="CCDS17944.1"/>
<dbReference type="RefSeq" id="NP_871789.1">
    <property type="nucleotide sequence ID" value="NM_181989.1"/>
</dbReference>
<dbReference type="SMR" id="Q7TQA3"/>
<dbReference type="FunCoup" id="Q7TQA3">
    <property type="interactions" value="322"/>
</dbReference>
<dbReference type="STRING" id="10090.ENSMUSP00000046298"/>
<dbReference type="PhosphoSitePlus" id="Q7TQA3"/>
<dbReference type="PaxDb" id="10090-ENSMUSP00000046298"/>
<dbReference type="ProteomicsDB" id="255057"/>
<dbReference type="Antibodypedia" id="11761">
    <property type="antibodies" value="118 antibodies from 21 providers"/>
</dbReference>
<dbReference type="DNASU" id="242285"/>
<dbReference type="Ensembl" id="ENSMUST00000040925.4">
    <property type="protein sequence ID" value="ENSMUSP00000046298.4"/>
    <property type="gene ID" value="ENSMUSG00000028236.4"/>
</dbReference>
<dbReference type="GeneID" id="242285"/>
<dbReference type="KEGG" id="mmu:242285"/>
<dbReference type="UCSC" id="uc008rww.1">
    <property type="organism name" value="mouse"/>
</dbReference>
<dbReference type="AGR" id="MGI:2668443"/>
<dbReference type="CTD" id="195814"/>
<dbReference type="MGI" id="MGI:2668443">
    <property type="gene designation" value="Sdr16c5"/>
</dbReference>
<dbReference type="VEuPathDB" id="HostDB:ENSMUSG00000028236"/>
<dbReference type="eggNOG" id="KOG1201">
    <property type="taxonomic scope" value="Eukaryota"/>
</dbReference>
<dbReference type="GeneTree" id="ENSGT00940000156731"/>
<dbReference type="HOGENOM" id="CLU_010194_2_5_1"/>
<dbReference type="InParanoid" id="Q7TQA3"/>
<dbReference type="OMA" id="RTPMIKM"/>
<dbReference type="OrthoDB" id="10253736at2759"/>
<dbReference type="PhylomeDB" id="Q7TQA3"/>
<dbReference type="TreeFam" id="TF312837"/>
<dbReference type="BRENDA" id="1.1.1.105">
    <property type="organism ID" value="3474"/>
</dbReference>
<dbReference type="Reactome" id="R-MMU-5365859">
    <property type="pathway name" value="RA biosynthesis pathway"/>
</dbReference>
<dbReference type="UniPathway" id="UPA00912"/>
<dbReference type="BioGRID-ORCS" id="242285">
    <property type="hits" value="2 hits in 77 CRISPR screens"/>
</dbReference>
<dbReference type="PRO" id="PR:Q7TQA3"/>
<dbReference type="Proteomes" id="UP000000589">
    <property type="component" value="Chromosome 4"/>
</dbReference>
<dbReference type="RNAct" id="Q7TQA3">
    <property type="molecule type" value="protein"/>
</dbReference>
<dbReference type="Bgee" id="ENSMUSG00000028236">
    <property type="expression patterns" value="Expressed in tail skin and 24 other cell types or tissues"/>
</dbReference>
<dbReference type="GO" id="GO:0000785">
    <property type="term" value="C:chromatin"/>
    <property type="evidence" value="ECO:0007669"/>
    <property type="project" value="Ensembl"/>
</dbReference>
<dbReference type="GO" id="GO:0005789">
    <property type="term" value="C:endoplasmic reticulum membrane"/>
    <property type="evidence" value="ECO:0007669"/>
    <property type="project" value="UniProtKB-SubCell"/>
</dbReference>
<dbReference type="GO" id="GO:0005634">
    <property type="term" value="C:nucleus"/>
    <property type="evidence" value="ECO:0007669"/>
    <property type="project" value="Ensembl"/>
</dbReference>
<dbReference type="GO" id="GO:0005886">
    <property type="term" value="C:plasma membrane"/>
    <property type="evidence" value="ECO:0007669"/>
    <property type="project" value="Ensembl"/>
</dbReference>
<dbReference type="GO" id="GO:0017053">
    <property type="term" value="C:transcription repressor complex"/>
    <property type="evidence" value="ECO:0007669"/>
    <property type="project" value="Ensembl"/>
</dbReference>
<dbReference type="GO" id="GO:0004745">
    <property type="term" value="F:all-trans-retinol dehydrogenase (NAD+) activity"/>
    <property type="evidence" value="ECO:0007669"/>
    <property type="project" value="UniProtKB-EC"/>
</dbReference>
<dbReference type="GO" id="GO:0061629">
    <property type="term" value="F:RNA polymerase II-specific DNA-binding transcription factor binding"/>
    <property type="evidence" value="ECO:0007669"/>
    <property type="project" value="Ensembl"/>
</dbReference>
<dbReference type="GO" id="GO:0003714">
    <property type="term" value="F:transcription corepressor activity"/>
    <property type="evidence" value="ECO:0007669"/>
    <property type="project" value="Ensembl"/>
</dbReference>
<dbReference type="GO" id="GO:0043616">
    <property type="term" value="P:keratinocyte proliferation"/>
    <property type="evidence" value="ECO:0007669"/>
    <property type="project" value="Ensembl"/>
</dbReference>
<dbReference type="GO" id="GO:0045814">
    <property type="term" value="P:negative regulation of gene expression, epigenetic"/>
    <property type="evidence" value="ECO:0007669"/>
    <property type="project" value="Ensembl"/>
</dbReference>
<dbReference type="GO" id="GO:0000122">
    <property type="term" value="P:negative regulation of transcription by RNA polymerase II"/>
    <property type="evidence" value="ECO:0007669"/>
    <property type="project" value="Ensembl"/>
</dbReference>
<dbReference type="GO" id="GO:0042574">
    <property type="term" value="P:retinal metabolic process"/>
    <property type="evidence" value="ECO:0007669"/>
    <property type="project" value="Ensembl"/>
</dbReference>
<dbReference type="GO" id="GO:0042572">
    <property type="term" value="P:retinol metabolic process"/>
    <property type="evidence" value="ECO:0007669"/>
    <property type="project" value="UniProtKB-UniPathway"/>
</dbReference>
<dbReference type="CDD" id="cd05339">
    <property type="entry name" value="17beta-HSDXI-like_SDR_c"/>
    <property type="match status" value="1"/>
</dbReference>
<dbReference type="FunFam" id="3.40.50.720:FF:000202">
    <property type="entry name" value="Short-chain dehydrogenase/reductase family 16C member 6"/>
    <property type="match status" value="1"/>
</dbReference>
<dbReference type="Gene3D" id="3.40.50.720">
    <property type="entry name" value="NAD(P)-binding Rossmann-like Domain"/>
    <property type="match status" value="1"/>
</dbReference>
<dbReference type="InterPro" id="IPR036291">
    <property type="entry name" value="NAD(P)-bd_dom_sf"/>
</dbReference>
<dbReference type="InterPro" id="IPR002347">
    <property type="entry name" value="SDR_fam"/>
</dbReference>
<dbReference type="PANTHER" id="PTHR24322:SF728">
    <property type="entry name" value="EPIDERMAL RETINOL DEHYDROGENASE 2"/>
    <property type="match status" value="1"/>
</dbReference>
<dbReference type="PANTHER" id="PTHR24322">
    <property type="entry name" value="PKSB"/>
    <property type="match status" value="1"/>
</dbReference>
<dbReference type="Pfam" id="PF00106">
    <property type="entry name" value="adh_short"/>
    <property type="match status" value="1"/>
</dbReference>
<dbReference type="PRINTS" id="PR00081">
    <property type="entry name" value="GDHRDH"/>
</dbReference>
<dbReference type="PRINTS" id="PR00080">
    <property type="entry name" value="SDRFAMILY"/>
</dbReference>
<dbReference type="SUPFAM" id="SSF51735">
    <property type="entry name" value="NAD(P)-binding Rossmann-fold domains"/>
    <property type="match status" value="1"/>
</dbReference>
<feature type="chain" id="PRO_0000305974" description="Epidermal retinol dehydrogenase 2">
    <location>
        <begin position="1"/>
        <end position="309"/>
    </location>
</feature>
<feature type="transmembrane region" description="Helical" evidence="4">
    <location>
        <begin position="11"/>
        <end position="31"/>
    </location>
</feature>
<feature type="transmembrane region" description="Helical" evidence="4">
    <location>
        <begin position="270"/>
        <end position="290"/>
    </location>
</feature>
<feature type="active site" description="Proton acceptor" evidence="3">
    <location>
        <position position="190"/>
    </location>
</feature>
<feature type="binding site" evidence="2">
    <location>
        <begin position="44"/>
        <end position="68"/>
    </location>
    <ligand>
        <name>NADP(+)</name>
        <dbReference type="ChEBI" id="CHEBI:58349"/>
    </ligand>
</feature>
<feature type="binding site" evidence="3">
    <location>
        <position position="177"/>
    </location>
    <ligand>
        <name>substrate</name>
    </ligand>
</feature>
<organism>
    <name type="scientific">Mus musculus</name>
    <name type="common">Mouse</name>
    <dbReference type="NCBI Taxonomy" id="10090"/>
    <lineage>
        <taxon>Eukaryota</taxon>
        <taxon>Metazoa</taxon>
        <taxon>Chordata</taxon>
        <taxon>Craniata</taxon>
        <taxon>Vertebrata</taxon>
        <taxon>Euteleostomi</taxon>
        <taxon>Mammalia</taxon>
        <taxon>Eutheria</taxon>
        <taxon>Euarchontoglires</taxon>
        <taxon>Glires</taxon>
        <taxon>Rodentia</taxon>
        <taxon>Myomorpha</taxon>
        <taxon>Muroidea</taxon>
        <taxon>Muridae</taxon>
        <taxon>Murinae</taxon>
        <taxon>Mus</taxon>
        <taxon>Mus</taxon>
    </lineage>
</organism>
<keyword id="KW-0256">Endoplasmic reticulum</keyword>
<keyword id="KW-0472">Membrane</keyword>
<keyword id="KW-0520">NAD</keyword>
<keyword id="KW-0521">NADP</keyword>
<keyword id="KW-0560">Oxidoreductase</keyword>
<keyword id="KW-1185">Reference proteome</keyword>
<keyword id="KW-0812">Transmembrane</keyword>
<keyword id="KW-1133">Transmembrane helix</keyword>
<reference key="1">
    <citation type="submission" date="2003-04" db="EMBL/GenBank/DDBJ databases">
        <authorList>
            <person name="Huang C.Q."/>
            <person name="Wu S.L."/>
            <person name="Cheng Z."/>
        </authorList>
    </citation>
    <scope>NUCLEOTIDE SEQUENCE [MRNA]</scope>
</reference>
<reference key="2">
    <citation type="journal article" date="2005" name="Science">
        <title>The transcriptional landscape of the mammalian genome.</title>
        <authorList>
            <person name="Carninci P."/>
            <person name="Kasukawa T."/>
            <person name="Katayama S."/>
            <person name="Gough J."/>
            <person name="Frith M.C."/>
            <person name="Maeda N."/>
            <person name="Oyama R."/>
            <person name="Ravasi T."/>
            <person name="Lenhard B."/>
            <person name="Wells C."/>
            <person name="Kodzius R."/>
            <person name="Shimokawa K."/>
            <person name="Bajic V.B."/>
            <person name="Brenner S.E."/>
            <person name="Batalov S."/>
            <person name="Forrest A.R."/>
            <person name="Zavolan M."/>
            <person name="Davis M.J."/>
            <person name="Wilming L.G."/>
            <person name="Aidinis V."/>
            <person name="Allen J.E."/>
            <person name="Ambesi-Impiombato A."/>
            <person name="Apweiler R."/>
            <person name="Aturaliya R.N."/>
            <person name="Bailey T.L."/>
            <person name="Bansal M."/>
            <person name="Baxter L."/>
            <person name="Beisel K.W."/>
            <person name="Bersano T."/>
            <person name="Bono H."/>
            <person name="Chalk A.M."/>
            <person name="Chiu K.P."/>
            <person name="Choudhary V."/>
            <person name="Christoffels A."/>
            <person name="Clutterbuck D.R."/>
            <person name="Crowe M.L."/>
            <person name="Dalla E."/>
            <person name="Dalrymple B.P."/>
            <person name="de Bono B."/>
            <person name="Della Gatta G."/>
            <person name="di Bernardo D."/>
            <person name="Down T."/>
            <person name="Engstrom P."/>
            <person name="Fagiolini M."/>
            <person name="Faulkner G."/>
            <person name="Fletcher C.F."/>
            <person name="Fukushima T."/>
            <person name="Furuno M."/>
            <person name="Futaki S."/>
            <person name="Gariboldi M."/>
            <person name="Georgii-Hemming P."/>
            <person name="Gingeras T.R."/>
            <person name="Gojobori T."/>
            <person name="Green R.E."/>
            <person name="Gustincich S."/>
            <person name="Harbers M."/>
            <person name="Hayashi Y."/>
            <person name="Hensch T.K."/>
            <person name="Hirokawa N."/>
            <person name="Hill D."/>
            <person name="Huminiecki L."/>
            <person name="Iacono M."/>
            <person name="Ikeo K."/>
            <person name="Iwama A."/>
            <person name="Ishikawa T."/>
            <person name="Jakt M."/>
            <person name="Kanapin A."/>
            <person name="Katoh M."/>
            <person name="Kawasawa Y."/>
            <person name="Kelso J."/>
            <person name="Kitamura H."/>
            <person name="Kitano H."/>
            <person name="Kollias G."/>
            <person name="Krishnan S.P."/>
            <person name="Kruger A."/>
            <person name="Kummerfeld S.K."/>
            <person name="Kurochkin I.V."/>
            <person name="Lareau L.F."/>
            <person name="Lazarevic D."/>
            <person name="Lipovich L."/>
            <person name="Liu J."/>
            <person name="Liuni S."/>
            <person name="McWilliam S."/>
            <person name="Madan Babu M."/>
            <person name="Madera M."/>
            <person name="Marchionni L."/>
            <person name="Matsuda H."/>
            <person name="Matsuzawa S."/>
            <person name="Miki H."/>
            <person name="Mignone F."/>
            <person name="Miyake S."/>
            <person name="Morris K."/>
            <person name="Mottagui-Tabar S."/>
            <person name="Mulder N."/>
            <person name="Nakano N."/>
            <person name="Nakauchi H."/>
            <person name="Ng P."/>
            <person name="Nilsson R."/>
            <person name="Nishiguchi S."/>
            <person name="Nishikawa S."/>
            <person name="Nori F."/>
            <person name="Ohara O."/>
            <person name="Okazaki Y."/>
            <person name="Orlando V."/>
            <person name="Pang K.C."/>
            <person name="Pavan W.J."/>
            <person name="Pavesi G."/>
            <person name="Pesole G."/>
            <person name="Petrovsky N."/>
            <person name="Piazza S."/>
            <person name="Reed J."/>
            <person name="Reid J.F."/>
            <person name="Ring B.Z."/>
            <person name="Ringwald M."/>
            <person name="Rost B."/>
            <person name="Ruan Y."/>
            <person name="Salzberg S.L."/>
            <person name="Sandelin A."/>
            <person name="Schneider C."/>
            <person name="Schoenbach C."/>
            <person name="Sekiguchi K."/>
            <person name="Semple C.A."/>
            <person name="Seno S."/>
            <person name="Sessa L."/>
            <person name="Sheng Y."/>
            <person name="Shibata Y."/>
            <person name="Shimada H."/>
            <person name="Shimada K."/>
            <person name="Silva D."/>
            <person name="Sinclair B."/>
            <person name="Sperling S."/>
            <person name="Stupka E."/>
            <person name="Sugiura K."/>
            <person name="Sultana R."/>
            <person name="Takenaka Y."/>
            <person name="Taki K."/>
            <person name="Tammoja K."/>
            <person name="Tan S.L."/>
            <person name="Tang S."/>
            <person name="Taylor M.S."/>
            <person name="Tegner J."/>
            <person name="Teichmann S.A."/>
            <person name="Ueda H.R."/>
            <person name="van Nimwegen E."/>
            <person name="Verardo R."/>
            <person name="Wei C.L."/>
            <person name="Yagi K."/>
            <person name="Yamanishi H."/>
            <person name="Zabarovsky E."/>
            <person name="Zhu S."/>
            <person name="Zimmer A."/>
            <person name="Hide W."/>
            <person name="Bult C."/>
            <person name="Grimmond S.M."/>
            <person name="Teasdale R.D."/>
            <person name="Liu E.T."/>
            <person name="Brusic V."/>
            <person name="Quackenbush J."/>
            <person name="Wahlestedt C."/>
            <person name="Mattick J.S."/>
            <person name="Hume D.A."/>
            <person name="Kai C."/>
            <person name="Sasaki D."/>
            <person name="Tomaru Y."/>
            <person name="Fukuda S."/>
            <person name="Kanamori-Katayama M."/>
            <person name="Suzuki M."/>
            <person name="Aoki J."/>
            <person name="Arakawa T."/>
            <person name="Iida J."/>
            <person name="Imamura K."/>
            <person name="Itoh M."/>
            <person name="Kato T."/>
            <person name="Kawaji H."/>
            <person name="Kawagashira N."/>
            <person name="Kawashima T."/>
            <person name="Kojima M."/>
            <person name="Kondo S."/>
            <person name="Konno H."/>
            <person name="Nakano K."/>
            <person name="Ninomiya N."/>
            <person name="Nishio T."/>
            <person name="Okada M."/>
            <person name="Plessy C."/>
            <person name="Shibata K."/>
            <person name="Shiraki T."/>
            <person name="Suzuki S."/>
            <person name="Tagami M."/>
            <person name="Waki K."/>
            <person name="Watahiki A."/>
            <person name="Okamura-Oho Y."/>
            <person name="Suzuki H."/>
            <person name="Kawai J."/>
            <person name="Hayashizaki Y."/>
        </authorList>
    </citation>
    <scope>NUCLEOTIDE SEQUENCE [LARGE SCALE MRNA]</scope>
    <source>
        <strain>C57BL/6J</strain>
        <tissue>Cecum</tissue>
    </source>
</reference>
<reference key="3">
    <citation type="journal article" date="2009" name="PLoS Biol.">
        <title>Lineage-specific biology revealed by a finished genome assembly of the mouse.</title>
        <authorList>
            <person name="Church D.M."/>
            <person name="Goodstadt L."/>
            <person name="Hillier L.W."/>
            <person name="Zody M.C."/>
            <person name="Goldstein S."/>
            <person name="She X."/>
            <person name="Bult C.J."/>
            <person name="Agarwala R."/>
            <person name="Cherry J.L."/>
            <person name="DiCuccio M."/>
            <person name="Hlavina W."/>
            <person name="Kapustin Y."/>
            <person name="Meric P."/>
            <person name="Maglott D."/>
            <person name="Birtle Z."/>
            <person name="Marques A.C."/>
            <person name="Graves T."/>
            <person name="Zhou S."/>
            <person name="Teague B."/>
            <person name="Potamousis K."/>
            <person name="Churas C."/>
            <person name="Place M."/>
            <person name="Herschleb J."/>
            <person name="Runnheim R."/>
            <person name="Forrest D."/>
            <person name="Amos-Landgraf J."/>
            <person name="Schwartz D.C."/>
            <person name="Cheng Z."/>
            <person name="Lindblad-Toh K."/>
            <person name="Eichler E.E."/>
            <person name="Ponting C.P."/>
        </authorList>
    </citation>
    <scope>NUCLEOTIDE SEQUENCE [LARGE SCALE GENOMIC DNA]</scope>
    <source>
        <strain>C57BL/6J</strain>
    </source>
</reference>
<reference key="4">
    <citation type="journal article" date="2004" name="Genome Res.">
        <title>The status, quality, and expansion of the NIH full-length cDNA project: the Mammalian Gene Collection (MGC).</title>
        <authorList>
            <consortium name="The MGC Project Team"/>
        </authorList>
    </citation>
    <scope>NUCLEOTIDE SEQUENCE [LARGE SCALE MRNA]</scope>
</reference>
<sequence>MSQNLESVKNLLVFLGKSLLSVLEALLFHVISKPRKNVAGEIVLITGAGSGLGRLLALQFARLGAVLVLWDVNKEANDETHQLAREAGAARVHAYTCDCSRREEVYRVADQVKKEVGDVSILINNAGIVTGRNFLDCPDDLMEKSFDVNFKAHLWMYKAFLPAMIANNHGHLVCISSSAGLIGVNGLSDYCASKFAALGFAESMFIETLAKKQWGIKTTIVCPFFIKTGMFEGCTTKCPTLLPILDPEYAVRKIIDAILQEQLYLYMPKFLYFIVFLKSILPIKTGILIADYLGVFHMTEGFTGQKKKT</sequence>
<evidence type="ECO:0000250" key="1">
    <source>
        <dbReference type="UniProtKB" id="Q8N3Y7"/>
    </source>
</evidence>
<evidence type="ECO:0000250" key="2">
    <source>
        <dbReference type="UniProtKB" id="Q8WNV7"/>
    </source>
</evidence>
<evidence type="ECO:0000250" key="3">
    <source>
        <dbReference type="UniProtKB" id="Q99714"/>
    </source>
</evidence>
<evidence type="ECO:0000255" key="4"/>
<evidence type="ECO:0000305" key="5"/>
<evidence type="ECO:0000312" key="6">
    <source>
        <dbReference type="MGI" id="MGI:2668443"/>
    </source>
</evidence>